<protein>
    <recommendedName>
        <fullName evidence="1">CinA-like protein</fullName>
    </recommendedName>
</protein>
<organism>
    <name type="scientific">Acidobacterium capsulatum (strain ATCC 51196 / DSM 11244 / BCRC 80197 / JCM 7670 / NBRC 15755 / NCIMB 13165 / 161)</name>
    <dbReference type="NCBI Taxonomy" id="240015"/>
    <lineage>
        <taxon>Bacteria</taxon>
        <taxon>Pseudomonadati</taxon>
        <taxon>Acidobacteriota</taxon>
        <taxon>Terriglobia</taxon>
        <taxon>Terriglobales</taxon>
        <taxon>Acidobacteriaceae</taxon>
        <taxon>Acidobacterium</taxon>
    </lineage>
</organism>
<feature type="chain" id="PRO_1000124971" description="CinA-like protein">
    <location>
        <begin position="1"/>
        <end position="414"/>
    </location>
</feature>
<reference key="1">
    <citation type="journal article" date="2009" name="Appl. Environ. Microbiol.">
        <title>Three genomes from the phylum Acidobacteria provide insight into the lifestyles of these microorganisms in soils.</title>
        <authorList>
            <person name="Ward N.L."/>
            <person name="Challacombe J.F."/>
            <person name="Janssen P.H."/>
            <person name="Henrissat B."/>
            <person name="Coutinho P.M."/>
            <person name="Wu M."/>
            <person name="Xie G."/>
            <person name="Haft D.H."/>
            <person name="Sait M."/>
            <person name="Badger J."/>
            <person name="Barabote R.D."/>
            <person name="Bradley B."/>
            <person name="Brettin T.S."/>
            <person name="Brinkac L.M."/>
            <person name="Bruce D."/>
            <person name="Creasy T."/>
            <person name="Daugherty S.C."/>
            <person name="Davidsen T.M."/>
            <person name="DeBoy R.T."/>
            <person name="Detter J.C."/>
            <person name="Dodson R.J."/>
            <person name="Durkin A.S."/>
            <person name="Ganapathy A."/>
            <person name="Gwinn-Giglio M."/>
            <person name="Han C.S."/>
            <person name="Khouri H."/>
            <person name="Kiss H."/>
            <person name="Kothari S.P."/>
            <person name="Madupu R."/>
            <person name="Nelson K.E."/>
            <person name="Nelson W.C."/>
            <person name="Paulsen I."/>
            <person name="Penn K."/>
            <person name="Ren Q."/>
            <person name="Rosovitz M.J."/>
            <person name="Selengut J.D."/>
            <person name="Shrivastava S."/>
            <person name="Sullivan S.A."/>
            <person name="Tapia R."/>
            <person name="Thompson L.S."/>
            <person name="Watkins K.L."/>
            <person name="Yang Q."/>
            <person name="Yu C."/>
            <person name="Zafar N."/>
            <person name="Zhou L."/>
            <person name="Kuske C.R."/>
        </authorList>
    </citation>
    <scope>NUCLEOTIDE SEQUENCE [LARGE SCALE GENOMIC DNA]</scope>
    <source>
        <strain>ATCC 51196 / DSM 11244 / BCRC 80197 / JCM 7670 / NBRC 15755 / NCIMB 13165 / 161</strain>
    </source>
</reference>
<proteinExistence type="inferred from homology"/>
<name>CINAL_ACIC5</name>
<gene>
    <name type="ordered locus">ACP_3409</name>
</gene>
<comment type="similarity">
    <text evidence="1">Belongs to the CinA family.</text>
</comment>
<dbReference type="EMBL" id="CP001472">
    <property type="protein sequence ID" value="ACO32744.1"/>
    <property type="molecule type" value="Genomic_DNA"/>
</dbReference>
<dbReference type="RefSeq" id="WP_015898438.1">
    <property type="nucleotide sequence ID" value="NC_012483.1"/>
</dbReference>
<dbReference type="SMR" id="C1F6H5"/>
<dbReference type="FunCoup" id="C1F6H5">
    <property type="interactions" value="124"/>
</dbReference>
<dbReference type="STRING" id="240015.ACP_3409"/>
<dbReference type="KEGG" id="aca:ACP_3409"/>
<dbReference type="eggNOG" id="COG1058">
    <property type="taxonomic scope" value="Bacteria"/>
</dbReference>
<dbReference type="eggNOG" id="COG1546">
    <property type="taxonomic scope" value="Bacteria"/>
</dbReference>
<dbReference type="HOGENOM" id="CLU_030805_9_3_0"/>
<dbReference type="InParanoid" id="C1F6H5"/>
<dbReference type="OrthoDB" id="9801454at2"/>
<dbReference type="Proteomes" id="UP000002207">
    <property type="component" value="Chromosome"/>
</dbReference>
<dbReference type="CDD" id="cd00885">
    <property type="entry name" value="cinA"/>
    <property type="match status" value="1"/>
</dbReference>
<dbReference type="Gene3D" id="3.90.950.20">
    <property type="entry name" value="CinA-like"/>
    <property type="match status" value="1"/>
</dbReference>
<dbReference type="Gene3D" id="3.40.980.10">
    <property type="entry name" value="MoaB/Mog-like domain"/>
    <property type="match status" value="1"/>
</dbReference>
<dbReference type="HAMAP" id="MF_00226_B">
    <property type="entry name" value="CinA_B"/>
    <property type="match status" value="1"/>
</dbReference>
<dbReference type="InterPro" id="IPR050101">
    <property type="entry name" value="CinA"/>
</dbReference>
<dbReference type="InterPro" id="IPR036653">
    <property type="entry name" value="CinA-like_C"/>
</dbReference>
<dbReference type="InterPro" id="IPR008136">
    <property type="entry name" value="CinA_C"/>
</dbReference>
<dbReference type="InterPro" id="IPR008135">
    <property type="entry name" value="Competence-induced_CinA"/>
</dbReference>
<dbReference type="InterPro" id="IPR036425">
    <property type="entry name" value="MoaB/Mog-like_dom_sf"/>
</dbReference>
<dbReference type="InterPro" id="IPR001453">
    <property type="entry name" value="MoaB/Mog_dom"/>
</dbReference>
<dbReference type="NCBIfam" id="TIGR00200">
    <property type="entry name" value="cinA_nterm"/>
    <property type="match status" value="1"/>
</dbReference>
<dbReference type="NCBIfam" id="TIGR00199">
    <property type="entry name" value="PncC_domain"/>
    <property type="match status" value="1"/>
</dbReference>
<dbReference type="NCBIfam" id="NF001813">
    <property type="entry name" value="PRK00549.1"/>
    <property type="match status" value="1"/>
</dbReference>
<dbReference type="PANTHER" id="PTHR13939">
    <property type="entry name" value="NICOTINAMIDE-NUCLEOTIDE AMIDOHYDROLASE PNCC"/>
    <property type="match status" value="1"/>
</dbReference>
<dbReference type="PANTHER" id="PTHR13939:SF0">
    <property type="entry name" value="NMN AMIDOHYDROLASE-LIKE PROTEIN YFAY"/>
    <property type="match status" value="1"/>
</dbReference>
<dbReference type="Pfam" id="PF02464">
    <property type="entry name" value="CinA"/>
    <property type="match status" value="1"/>
</dbReference>
<dbReference type="Pfam" id="PF00994">
    <property type="entry name" value="MoCF_biosynth"/>
    <property type="match status" value="1"/>
</dbReference>
<dbReference type="PIRSF" id="PIRSF006728">
    <property type="entry name" value="CinA"/>
    <property type="match status" value="1"/>
</dbReference>
<dbReference type="SMART" id="SM00852">
    <property type="entry name" value="MoCF_biosynth"/>
    <property type="match status" value="1"/>
</dbReference>
<dbReference type="SUPFAM" id="SSF142433">
    <property type="entry name" value="CinA-like"/>
    <property type="match status" value="1"/>
</dbReference>
<dbReference type="SUPFAM" id="SSF53218">
    <property type="entry name" value="Molybdenum cofactor biosynthesis proteins"/>
    <property type="match status" value="1"/>
</dbReference>
<evidence type="ECO:0000255" key="1">
    <source>
        <dbReference type="HAMAP-Rule" id="MF_00226"/>
    </source>
</evidence>
<sequence>MIAEIIAVGSEMLTPFRQDTNSLYLTEKFNSLGVTIAFKTIVGDKQRHLVDAIRQALRRVDIVAISGGLGPTEDDLTRECVAEALGRTLTRDAALIANMYARAAARRVTITRNNEKQADVIDGAVILENGRGTAPGQWLDIVHGEHRKLLMLLPGPPSELKGMFDEQCMPLLADALPKRAIAMRVLKAAMIGESQCDARIAPIYQQYTDIETTILAHLGDIQLNLSCSKPFLAQARLRVDELASRIEEELDDVLYSSQGETLEQIVLYYLEMRGASLAVAESCTGGLISERLTGIPGSSRSFAGGAVVYSNELKTLLAGVDPELIGSYGAVSSQVAKALAEGIRERCSAHFGLGVTGIAGPGGGSEDKPVGLVYLAVSTPEETTVLERRFTGDRHRIRHLAAQQALDMVRRRLM</sequence>
<accession>C1F6H5</accession>
<keyword id="KW-1185">Reference proteome</keyword>